<keyword id="KW-0025">Alternative splicing</keyword>
<keyword id="KW-0131">Cell cycle</keyword>
<keyword id="KW-0132">Cell division</keyword>
<keyword id="KW-0195">Cyclin</keyword>
<keyword id="KW-0539">Nucleus</keyword>
<keyword id="KW-0597">Phosphoprotein</keyword>
<keyword id="KW-1185">Reference proteome</keyword>
<accession>P54733</accession>
<accession>Q24479</accession>
<accession>Q95RP5</accession>
<accession>Q9V3B3</accession>
<accession>Q9V456</accession>
<protein>
    <recommendedName>
        <fullName>G1/S-specific cyclin-E</fullName>
        <shortName>DmCycE</shortName>
    </recommendedName>
</protein>
<feature type="chain" id="PRO_0000080459" description="G1/S-specific cyclin-E">
    <location>
        <begin position="1"/>
        <end position="709"/>
    </location>
</feature>
<feature type="region of interest" description="Disordered" evidence="2">
    <location>
        <begin position="1"/>
        <end position="30"/>
    </location>
</feature>
<feature type="region of interest" description="Disordered" evidence="2">
    <location>
        <begin position="43"/>
        <end position="149"/>
    </location>
</feature>
<feature type="region of interest" description="Disordered" evidence="2">
    <location>
        <begin position="162"/>
        <end position="205"/>
    </location>
</feature>
<feature type="region of interest" description="Disordered" evidence="2">
    <location>
        <begin position="221"/>
        <end position="289"/>
    </location>
</feature>
<feature type="region of interest" description="Disordered" evidence="2">
    <location>
        <begin position="642"/>
        <end position="709"/>
    </location>
</feature>
<feature type="compositionally biased region" description="Polar residues" evidence="2">
    <location>
        <begin position="7"/>
        <end position="29"/>
    </location>
</feature>
<feature type="compositionally biased region" description="Polar residues" evidence="2">
    <location>
        <begin position="61"/>
        <end position="70"/>
    </location>
</feature>
<feature type="compositionally biased region" description="Polar residues" evidence="2">
    <location>
        <begin position="91"/>
        <end position="106"/>
    </location>
</feature>
<feature type="compositionally biased region" description="Polar residues" evidence="2">
    <location>
        <begin position="162"/>
        <end position="175"/>
    </location>
</feature>
<feature type="compositionally biased region" description="Pro residues" evidence="2">
    <location>
        <begin position="187"/>
        <end position="199"/>
    </location>
</feature>
<feature type="compositionally biased region" description="Acidic residues" evidence="2">
    <location>
        <begin position="228"/>
        <end position="258"/>
    </location>
</feature>
<feature type="compositionally biased region" description="Polar residues" evidence="2">
    <location>
        <begin position="260"/>
        <end position="277"/>
    </location>
</feature>
<feature type="compositionally biased region" description="Low complexity" evidence="2">
    <location>
        <begin position="677"/>
        <end position="709"/>
    </location>
</feature>
<feature type="modified residue" description="Phosphoserine" evidence="5">
    <location>
        <position position="114"/>
    </location>
</feature>
<feature type="modified residue" description="Phosphoserine" evidence="5">
    <location>
        <position position="115"/>
    </location>
</feature>
<feature type="modified residue" description="Phosphoserine" evidence="5">
    <location>
        <position position="117"/>
    </location>
</feature>
<feature type="modified residue" description="Phosphoserine" evidence="5">
    <location>
        <position position="129"/>
    </location>
</feature>
<feature type="modified residue" description="Phosphoserine" evidence="5">
    <location>
        <position position="187"/>
    </location>
</feature>
<feature type="modified residue" description="Phosphoserine" evidence="5">
    <location>
        <position position="192"/>
    </location>
</feature>
<feature type="modified residue" description="Phosphoserine" evidence="5">
    <location>
        <position position="195"/>
    </location>
</feature>
<feature type="modified residue" description="Phosphoserine" evidence="5">
    <location>
        <position position="198"/>
    </location>
</feature>
<feature type="modified residue" description="Phosphothreonine" evidence="1">
    <location>
        <position position="651"/>
    </location>
</feature>
<feature type="splice variant" id="VSP_001254" description="In isoform I." evidence="7">
    <location>
        <begin position="1"/>
        <end position="107"/>
    </location>
</feature>
<feature type="splice variant" id="VSP_001255" description="In isoform I." evidence="7">
    <original>KRKRRLSSDSNE</original>
    <variation>MKLEQKRKFIEM</variation>
    <location>
        <begin position="108"/>
        <end position="119"/>
    </location>
</feature>
<feature type="sequence conflict" description="In Ref. 1; CAA52934." evidence="8" ref="1">
    <original>A</original>
    <variation>S</variation>
    <location>
        <position position="633"/>
    </location>
</feature>
<feature type="sequence conflict" description="In Ref. 1; CAA52934." evidence="8" ref="1">
    <original>RA</original>
    <variation>P</variation>
    <location>
        <begin position="644"/>
        <end position="645"/>
    </location>
</feature>
<feature type="sequence conflict" description="In Ref. 1; CAA52934." evidence="8" ref="1">
    <original>G</original>
    <variation>V</variation>
    <location>
        <position position="691"/>
    </location>
</feature>
<organism>
    <name type="scientific">Drosophila melanogaster</name>
    <name type="common">Fruit fly</name>
    <dbReference type="NCBI Taxonomy" id="7227"/>
    <lineage>
        <taxon>Eukaryota</taxon>
        <taxon>Metazoa</taxon>
        <taxon>Ecdysozoa</taxon>
        <taxon>Arthropoda</taxon>
        <taxon>Hexapoda</taxon>
        <taxon>Insecta</taxon>
        <taxon>Pterygota</taxon>
        <taxon>Neoptera</taxon>
        <taxon>Endopterygota</taxon>
        <taxon>Diptera</taxon>
        <taxon>Brachycera</taxon>
        <taxon>Muscomorpha</taxon>
        <taxon>Ephydroidea</taxon>
        <taxon>Drosophilidae</taxon>
        <taxon>Drosophila</taxon>
        <taxon>Sophophora</taxon>
    </lineage>
</organism>
<sequence>MGLNAKSVCSTSSTEPNGSIVTTAPSNGEVSSSIVVVVSSSSISSSSDSPIAILPHPDPIPSTSFSSASQRSEEELPGTSAASRTDEMCSCDSQNLAASTAATSNGNKRKRRLSSDSNEDPELGFEPPSAKRQQRLPALYGSEQGNLSSVASSVYTSPVVSVDGQSTQELLSIRSSPAEDLSEAPHSPLPDSPDSPPSPDRGSKQTPVVVRYAAEQVVTSTVVTQKTEDDDLLDDSCEDYSYDEDDEDDVEEEDDDVEIYSSTISPASSGCSQQQAVNGERTPGLPKHQEQIHHPVSDLMINMRTPMSPAVENGLRQCPLPALAWANAADVWRLMCHRDEQDSRLRSISMLEQHPGLQPRMRAILLDWLIEVCEVYKLHRETFYLAVDYLDRYLHVAHKVQKTHLQLIGITCLFVAAKVEEIYPPKIGEFAYVTDGACTERDILNHEKILLQALDWDISPITITGWLGVYMQLNVNNRTPASFSQIGRQKSAEADDAFIYPQFSGFEFVQTSQLLDLCTLDVGMANYSYSVLAAAAISHTFSREMALRCSGLDWQVIQPCARWMEPFFRVISQKAPYLQLNEQNEQVSNKFGLGLICPNIVTDDSHIIQTHTTTMDMYDEVLMAQDAAHAMRARIQASPATALRAPESLLTPPASSHKPDEYLGDEGDETGARSGISSTTTCCNTAASNKGGKSSSNNSVTSCSSRSNP</sequence>
<comment type="function">
    <text evidence="3 6">Essential for the control of the cell cycle at the G1/S (start) transition. Targeted by archipelago for degradation by the SFC ubiquitin ligase complex.</text>
</comment>
<comment type="subunit">
    <text evidence="3 4">Interacts with a member of the CDK2/CDK protein kinases to form a serine/threonine kinase holoenzyme complex (PubMed:11565033). The cyclin subunit imparts substrate specificity to the complex (PubMed:11565033). Interacts (via C-terminus) with Z600 (via C-terminus) (PubMed:17431409).</text>
</comment>
<comment type="interaction">
    <interactant intactId="EBI-203549">
        <id>P54733</id>
    </interactant>
    <interactant intactId="EBI-108689">
        <id>P23572</id>
        <label>Cdk1</label>
    </interactant>
    <organismsDiffer>false</organismsDiffer>
    <experiments>6</experiments>
</comment>
<comment type="interaction">
    <interactant intactId="EBI-203549">
        <id>P54733</id>
    </interactant>
    <interactant intactId="EBI-7376821">
        <id>P22469</id>
        <label>Z600</label>
    </interactant>
    <organismsDiffer>false</organismsDiffer>
    <experiments>3</experiments>
</comment>
<comment type="subcellular location">
    <subcellularLocation>
        <location evidence="6">Nucleus</location>
    </subcellularLocation>
</comment>
<comment type="alternative products">
    <event type="alternative splicing"/>
    <isoform>
        <id>P54733-1</id>
        <name>II</name>
        <name>A</name>
        <name>C</name>
        <sequence type="displayed"/>
    </isoform>
    <isoform>
        <id>P54733-2</id>
        <name>I</name>
        <name>B</name>
        <sequence type="described" ref="VSP_001254 VSP_001255"/>
    </isoform>
</comment>
<comment type="tissue specificity">
    <text evidence="6">Isoform II is ubiquitous in early embryos and, prior to mitosis 14, is rapidly degraded in all cells except the pole (germ) cells. Expressed during G1 phase in proliferating peripheral nervous system cells. Constitutive expression in embryonic cycles lacking a G1 phase.</text>
</comment>
<comment type="developmental stage">
    <text evidence="6">Isoform II is expressed maternally and isoform I zygotically in larvae.</text>
</comment>
<comment type="similarity">
    <text evidence="8">Belongs to the cyclin family. Cyclin E subfamily.</text>
</comment>
<reference key="1">
    <citation type="journal article" date="1993" name="Development">
        <title>A Drosophila G1-specific cyclin E homolog exhibits different modes of expression during embryogenesis.</title>
        <authorList>
            <person name="Richardson H.E."/>
            <person name="O'Keefe L.V."/>
            <person name="Reed S.I."/>
            <person name="Saint R."/>
        </authorList>
    </citation>
    <scope>NUCLEOTIDE SEQUENCE [MRNA] (ISOFORMS I AND II)</scope>
    <scope>FUNCTION</scope>
    <scope>SUBCELLULAR LOCATION</scope>
    <scope>TISSUE SPECIFICITY</scope>
    <scope>DEVELOPMENTAL STAGE</scope>
    <source>
        <tissue>Embryo</tissue>
    </source>
</reference>
<reference key="2">
    <citation type="journal article" date="1999" name="Genetics">
        <title>An exploration of the sequence of a 2.9-Mb region of the genome of Drosophila melanogaster: the Adh region.</title>
        <authorList>
            <person name="Ashburner M."/>
            <person name="Misra S."/>
            <person name="Roote J."/>
            <person name="Lewis S.E."/>
            <person name="Blazej R.G."/>
            <person name="Davis T."/>
            <person name="Doyle C."/>
            <person name="Galle R.F."/>
            <person name="George R.A."/>
            <person name="Harris N.L."/>
            <person name="Hartzell G."/>
            <person name="Harvey D.A."/>
            <person name="Hong L."/>
            <person name="Houston K.A."/>
            <person name="Hoskins R.A."/>
            <person name="Johnson G."/>
            <person name="Martin C."/>
            <person name="Moshrefi A.R."/>
            <person name="Palazzolo M."/>
            <person name="Reese M.G."/>
            <person name="Spradling A.C."/>
            <person name="Tsang G."/>
            <person name="Wan K.H."/>
            <person name="Whitelaw K."/>
            <person name="Celniker S.E."/>
            <person name="Rubin G.M."/>
        </authorList>
    </citation>
    <scope>NUCLEOTIDE SEQUENCE [LARGE SCALE GENOMIC DNA]</scope>
    <source>
        <strain>Berkeley</strain>
    </source>
</reference>
<reference key="3">
    <citation type="journal article" date="2000" name="Science">
        <title>The genome sequence of Drosophila melanogaster.</title>
        <authorList>
            <person name="Adams M.D."/>
            <person name="Celniker S.E."/>
            <person name="Holt R.A."/>
            <person name="Evans C.A."/>
            <person name="Gocayne J.D."/>
            <person name="Amanatides P.G."/>
            <person name="Scherer S.E."/>
            <person name="Li P.W."/>
            <person name="Hoskins R.A."/>
            <person name="Galle R.F."/>
            <person name="George R.A."/>
            <person name="Lewis S.E."/>
            <person name="Richards S."/>
            <person name="Ashburner M."/>
            <person name="Henderson S.N."/>
            <person name="Sutton G.G."/>
            <person name="Wortman J.R."/>
            <person name="Yandell M.D."/>
            <person name="Zhang Q."/>
            <person name="Chen L.X."/>
            <person name="Brandon R.C."/>
            <person name="Rogers Y.-H.C."/>
            <person name="Blazej R.G."/>
            <person name="Champe M."/>
            <person name="Pfeiffer B.D."/>
            <person name="Wan K.H."/>
            <person name="Doyle C."/>
            <person name="Baxter E.G."/>
            <person name="Helt G."/>
            <person name="Nelson C.R."/>
            <person name="Miklos G.L.G."/>
            <person name="Abril J.F."/>
            <person name="Agbayani A."/>
            <person name="An H.-J."/>
            <person name="Andrews-Pfannkoch C."/>
            <person name="Baldwin D."/>
            <person name="Ballew R.M."/>
            <person name="Basu A."/>
            <person name="Baxendale J."/>
            <person name="Bayraktaroglu L."/>
            <person name="Beasley E.M."/>
            <person name="Beeson K.Y."/>
            <person name="Benos P.V."/>
            <person name="Berman B.P."/>
            <person name="Bhandari D."/>
            <person name="Bolshakov S."/>
            <person name="Borkova D."/>
            <person name="Botchan M.R."/>
            <person name="Bouck J."/>
            <person name="Brokstein P."/>
            <person name="Brottier P."/>
            <person name="Burtis K.C."/>
            <person name="Busam D.A."/>
            <person name="Butler H."/>
            <person name="Cadieu E."/>
            <person name="Center A."/>
            <person name="Chandra I."/>
            <person name="Cherry J.M."/>
            <person name="Cawley S."/>
            <person name="Dahlke C."/>
            <person name="Davenport L.B."/>
            <person name="Davies P."/>
            <person name="de Pablos B."/>
            <person name="Delcher A."/>
            <person name="Deng Z."/>
            <person name="Mays A.D."/>
            <person name="Dew I."/>
            <person name="Dietz S.M."/>
            <person name="Dodson K."/>
            <person name="Doup L.E."/>
            <person name="Downes M."/>
            <person name="Dugan-Rocha S."/>
            <person name="Dunkov B.C."/>
            <person name="Dunn P."/>
            <person name="Durbin K.J."/>
            <person name="Evangelista C.C."/>
            <person name="Ferraz C."/>
            <person name="Ferriera S."/>
            <person name="Fleischmann W."/>
            <person name="Fosler C."/>
            <person name="Gabrielian A.E."/>
            <person name="Garg N.S."/>
            <person name="Gelbart W.M."/>
            <person name="Glasser K."/>
            <person name="Glodek A."/>
            <person name="Gong F."/>
            <person name="Gorrell J.H."/>
            <person name="Gu Z."/>
            <person name="Guan P."/>
            <person name="Harris M."/>
            <person name="Harris N.L."/>
            <person name="Harvey D.A."/>
            <person name="Heiman T.J."/>
            <person name="Hernandez J.R."/>
            <person name="Houck J."/>
            <person name="Hostin D."/>
            <person name="Houston K.A."/>
            <person name="Howland T.J."/>
            <person name="Wei M.-H."/>
            <person name="Ibegwam C."/>
            <person name="Jalali M."/>
            <person name="Kalush F."/>
            <person name="Karpen G.H."/>
            <person name="Ke Z."/>
            <person name="Kennison J.A."/>
            <person name="Ketchum K.A."/>
            <person name="Kimmel B.E."/>
            <person name="Kodira C.D."/>
            <person name="Kraft C.L."/>
            <person name="Kravitz S."/>
            <person name="Kulp D."/>
            <person name="Lai Z."/>
            <person name="Lasko P."/>
            <person name="Lei Y."/>
            <person name="Levitsky A.A."/>
            <person name="Li J.H."/>
            <person name="Li Z."/>
            <person name="Liang Y."/>
            <person name="Lin X."/>
            <person name="Liu X."/>
            <person name="Mattei B."/>
            <person name="McIntosh T.C."/>
            <person name="McLeod M.P."/>
            <person name="McPherson D."/>
            <person name="Merkulov G."/>
            <person name="Milshina N.V."/>
            <person name="Mobarry C."/>
            <person name="Morris J."/>
            <person name="Moshrefi A."/>
            <person name="Mount S.M."/>
            <person name="Moy M."/>
            <person name="Murphy B."/>
            <person name="Murphy L."/>
            <person name="Muzny D.M."/>
            <person name="Nelson D.L."/>
            <person name="Nelson D.R."/>
            <person name="Nelson K.A."/>
            <person name="Nixon K."/>
            <person name="Nusskern D.R."/>
            <person name="Pacleb J.M."/>
            <person name="Palazzolo M."/>
            <person name="Pittman G.S."/>
            <person name="Pan S."/>
            <person name="Pollard J."/>
            <person name="Puri V."/>
            <person name="Reese M.G."/>
            <person name="Reinert K."/>
            <person name="Remington K."/>
            <person name="Saunders R.D.C."/>
            <person name="Scheeler F."/>
            <person name="Shen H."/>
            <person name="Shue B.C."/>
            <person name="Siden-Kiamos I."/>
            <person name="Simpson M."/>
            <person name="Skupski M.P."/>
            <person name="Smith T.J."/>
            <person name="Spier E."/>
            <person name="Spradling A.C."/>
            <person name="Stapleton M."/>
            <person name="Strong R."/>
            <person name="Sun E."/>
            <person name="Svirskas R."/>
            <person name="Tector C."/>
            <person name="Turner R."/>
            <person name="Venter E."/>
            <person name="Wang A.H."/>
            <person name="Wang X."/>
            <person name="Wang Z.-Y."/>
            <person name="Wassarman D.A."/>
            <person name="Weinstock G.M."/>
            <person name="Weissenbach J."/>
            <person name="Williams S.M."/>
            <person name="Woodage T."/>
            <person name="Worley K.C."/>
            <person name="Wu D."/>
            <person name="Yang S."/>
            <person name="Yao Q.A."/>
            <person name="Ye J."/>
            <person name="Yeh R.-F."/>
            <person name="Zaveri J.S."/>
            <person name="Zhan M."/>
            <person name="Zhang G."/>
            <person name="Zhao Q."/>
            <person name="Zheng L."/>
            <person name="Zheng X.H."/>
            <person name="Zhong F.N."/>
            <person name="Zhong W."/>
            <person name="Zhou X."/>
            <person name="Zhu S.C."/>
            <person name="Zhu X."/>
            <person name="Smith H.O."/>
            <person name="Gibbs R.A."/>
            <person name="Myers E.W."/>
            <person name="Rubin G.M."/>
            <person name="Venter J.C."/>
        </authorList>
    </citation>
    <scope>NUCLEOTIDE SEQUENCE [LARGE SCALE GENOMIC DNA]</scope>
    <source>
        <strain>Berkeley</strain>
    </source>
</reference>
<reference key="4">
    <citation type="journal article" date="2002" name="Genome Biol.">
        <title>Annotation of the Drosophila melanogaster euchromatic genome: a systematic review.</title>
        <authorList>
            <person name="Misra S."/>
            <person name="Crosby M.A."/>
            <person name="Mungall C.J."/>
            <person name="Matthews B.B."/>
            <person name="Campbell K.S."/>
            <person name="Hradecky P."/>
            <person name="Huang Y."/>
            <person name="Kaminker J.S."/>
            <person name="Millburn G.H."/>
            <person name="Prochnik S.E."/>
            <person name="Smith C.D."/>
            <person name="Tupy J.L."/>
            <person name="Whitfield E.J."/>
            <person name="Bayraktaroglu L."/>
            <person name="Berman B.P."/>
            <person name="Bettencourt B.R."/>
            <person name="Celniker S.E."/>
            <person name="de Grey A.D.N.J."/>
            <person name="Drysdale R.A."/>
            <person name="Harris N.L."/>
            <person name="Richter J."/>
            <person name="Russo S."/>
            <person name="Schroeder A.J."/>
            <person name="Shu S.Q."/>
            <person name="Stapleton M."/>
            <person name="Yamada C."/>
            <person name="Ashburner M."/>
            <person name="Gelbart W.M."/>
            <person name="Rubin G.M."/>
            <person name="Lewis S.E."/>
        </authorList>
    </citation>
    <scope>GENOME REANNOTATION</scope>
    <source>
        <strain>Berkeley</strain>
    </source>
</reference>
<reference key="5">
    <citation type="journal article" date="2002" name="Genome Biol.">
        <title>A Drosophila full-length cDNA resource.</title>
        <authorList>
            <person name="Stapleton M."/>
            <person name="Carlson J.W."/>
            <person name="Brokstein P."/>
            <person name="Yu C."/>
            <person name="Champe M."/>
            <person name="George R.A."/>
            <person name="Guarin H."/>
            <person name="Kronmiller B."/>
            <person name="Pacleb J.M."/>
            <person name="Park S."/>
            <person name="Wan K.H."/>
            <person name="Rubin G.M."/>
            <person name="Celniker S.E."/>
        </authorList>
    </citation>
    <scope>NUCLEOTIDE SEQUENCE [LARGE SCALE MRNA] (ISOFORM II)</scope>
    <source>
        <strain>Berkeley</strain>
        <tissue>Embryo</tissue>
    </source>
</reference>
<reference key="6">
    <citation type="journal article" date="2001" name="Nature">
        <title>Archipelago regulates cyclin E levels in Drosophila and is mutated in human cancer cell lines.</title>
        <authorList>
            <person name="Moberg K.H."/>
            <person name="Bell D.W."/>
            <person name="Wahrer D.C.R."/>
            <person name="Haber D.A."/>
            <person name="Hariharan I.K."/>
        </authorList>
    </citation>
    <scope>FUNCTION</scope>
    <scope>INTERACTION WITH AGO</scope>
</reference>
<reference key="7">
    <citation type="journal article" date="2007" name="EMBO Rep.">
        <title>The Drosophila mitotic inhibitor Fruehstart specifically binds to the hydrophobic patch of cyclins.</title>
        <authorList>
            <person name="Gawlinski P."/>
            <person name="Nikolay R."/>
            <person name="Goursot C."/>
            <person name="Lawo S."/>
            <person name="Chaurasia B."/>
            <person name="Herz H.M."/>
            <person name="Kussler-Schneider Y."/>
            <person name="Ruppert T."/>
            <person name="Mayer M."/>
            <person name="Grosshans J."/>
        </authorList>
    </citation>
    <scope>INTERACTION WITH Z600</scope>
</reference>
<reference key="8">
    <citation type="journal article" date="2008" name="J. Proteome Res.">
        <title>Phosphoproteome analysis of Drosophila melanogaster embryos.</title>
        <authorList>
            <person name="Zhai B."/>
            <person name="Villen J."/>
            <person name="Beausoleil S.A."/>
            <person name="Mintseris J."/>
            <person name="Gygi S.P."/>
        </authorList>
    </citation>
    <scope>PHOSPHORYLATION [LARGE SCALE ANALYSIS] AT SER-114; SER-115; SER-117; SER-129; SER-187; SER-192; SER-195 AND SER-198</scope>
    <scope>IDENTIFICATION BY MASS SPECTROMETRY</scope>
    <source>
        <tissue>Embryo</tissue>
    </source>
</reference>
<gene>
    <name type="primary">CycE</name>
    <name type="ORF">CG3938</name>
</gene>
<name>CCNE_DROME</name>
<evidence type="ECO:0000250" key="1"/>
<evidence type="ECO:0000256" key="2">
    <source>
        <dbReference type="SAM" id="MobiDB-lite"/>
    </source>
</evidence>
<evidence type="ECO:0000269" key="3">
    <source>
    </source>
</evidence>
<evidence type="ECO:0000269" key="4">
    <source>
    </source>
</evidence>
<evidence type="ECO:0000269" key="5">
    <source>
    </source>
</evidence>
<evidence type="ECO:0000269" key="6">
    <source>
    </source>
</evidence>
<evidence type="ECO:0000303" key="7">
    <source>
    </source>
</evidence>
<evidence type="ECO:0000305" key="8"/>
<proteinExistence type="evidence at protein level"/>
<dbReference type="EMBL" id="X75026">
    <property type="protein sequence ID" value="CAA52934.1"/>
    <property type="molecule type" value="mRNA"/>
</dbReference>
<dbReference type="EMBL" id="X75027">
    <property type="protein sequence ID" value="CAA52935.1"/>
    <property type="molecule type" value="mRNA"/>
</dbReference>
<dbReference type="EMBL" id="AE014134">
    <property type="protein sequence ID" value="AAF53477.1"/>
    <property type="molecule type" value="Genomic_DNA"/>
</dbReference>
<dbReference type="EMBL" id="AE014134">
    <property type="protein sequence ID" value="AAF53479.1"/>
    <property type="molecule type" value="Genomic_DNA"/>
</dbReference>
<dbReference type="EMBL" id="AY069507">
    <property type="protein sequence ID" value="AAL39652.1"/>
    <property type="molecule type" value="mRNA"/>
</dbReference>
<dbReference type="EMBL" id="AY061233">
    <property type="protein sequence ID" value="AAL28781.1"/>
    <property type="molecule type" value="mRNA"/>
</dbReference>
<dbReference type="PIR" id="S41755">
    <property type="entry name" value="S41755"/>
</dbReference>
<dbReference type="PIR" id="S41756">
    <property type="entry name" value="S41756"/>
</dbReference>
<dbReference type="RefSeq" id="NP_476959.1">
    <molecule id="P54733-1"/>
    <property type="nucleotide sequence ID" value="NM_057611.5"/>
</dbReference>
<dbReference type="RefSeq" id="NP_476960.1">
    <molecule id="P54733-2"/>
    <property type="nucleotide sequence ID" value="NM_057612.5"/>
</dbReference>
<dbReference type="RefSeq" id="NP_723924.1">
    <molecule id="P54733-1"/>
    <property type="nucleotide sequence ID" value="NM_165123.3"/>
</dbReference>
<dbReference type="RefSeq" id="NP_723925.1">
    <molecule id="P54733-1"/>
    <property type="nucleotide sequence ID" value="NM_165124.3"/>
</dbReference>
<dbReference type="RefSeq" id="NP_723926.1">
    <molecule id="P54733-1"/>
    <property type="nucleotide sequence ID" value="NM_165125.3"/>
</dbReference>
<dbReference type="SMR" id="P54733"/>
<dbReference type="BioGRID" id="60939">
    <property type="interactions" value="171"/>
</dbReference>
<dbReference type="DIP" id="DIP-18331N"/>
<dbReference type="ELM" id="P54733"/>
<dbReference type="FunCoup" id="P54733">
    <property type="interactions" value="160"/>
</dbReference>
<dbReference type="IntAct" id="P54733">
    <property type="interactions" value="25"/>
</dbReference>
<dbReference type="MINT" id="P54733"/>
<dbReference type="STRING" id="7227.FBpp0294012"/>
<dbReference type="iPTMnet" id="P54733"/>
<dbReference type="PaxDb" id="7227-FBpp0294012"/>
<dbReference type="EnsemblMetazoa" id="FBtr0080773">
    <molecule id="P54733-1"/>
    <property type="protein sequence ID" value="FBpp0080331"/>
    <property type="gene ID" value="FBgn0010382"/>
</dbReference>
<dbReference type="EnsemblMetazoa" id="FBtr0080774">
    <molecule id="P54733-1"/>
    <property type="protein sequence ID" value="FBpp0080332"/>
    <property type="gene ID" value="FBgn0010382"/>
</dbReference>
<dbReference type="EnsemblMetazoa" id="FBtr0080775">
    <molecule id="P54733-1"/>
    <property type="protein sequence ID" value="FBpp0080333"/>
    <property type="gene ID" value="FBgn0010382"/>
</dbReference>
<dbReference type="EnsemblMetazoa" id="FBtr0080776">
    <molecule id="P54733-1"/>
    <property type="protein sequence ID" value="FBpp0080334"/>
    <property type="gene ID" value="FBgn0010382"/>
</dbReference>
<dbReference type="EnsemblMetazoa" id="FBtr0080777">
    <molecule id="P54733-2"/>
    <property type="protein sequence ID" value="FBpp0080335"/>
    <property type="gene ID" value="FBgn0010382"/>
</dbReference>
<dbReference type="GeneID" id="34924"/>
<dbReference type="KEGG" id="dme:Dmel_CG3938"/>
<dbReference type="AGR" id="FB:FBgn0010382"/>
<dbReference type="CTD" id="34924"/>
<dbReference type="FlyBase" id="FBgn0010382">
    <property type="gene designation" value="CycE"/>
</dbReference>
<dbReference type="VEuPathDB" id="VectorBase:FBgn0010382"/>
<dbReference type="eggNOG" id="KOG0655">
    <property type="taxonomic scope" value="Eukaryota"/>
</dbReference>
<dbReference type="GeneTree" id="ENSGT00940000169122"/>
<dbReference type="InParanoid" id="P54733"/>
<dbReference type="OrthoDB" id="5590282at2759"/>
<dbReference type="PhylomeDB" id="P54733"/>
<dbReference type="Reactome" id="R-DME-1538133">
    <property type="pathway name" value="G0 and Early G1"/>
</dbReference>
<dbReference type="Reactome" id="R-DME-187577">
    <property type="pathway name" value="SCF(Skp2)-mediated degradation of p27/p21"/>
</dbReference>
<dbReference type="Reactome" id="R-DME-2559586">
    <property type="pathway name" value="DNA Damage/Telomere Stress Induced Senescence"/>
</dbReference>
<dbReference type="Reactome" id="R-DME-6804116">
    <property type="pathway name" value="TP53 Regulates Transcription of Genes Involved in G1 Cell Cycle Arrest"/>
</dbReference>
<dbReference type="Reactome" id="R-DME-69017">
    <property type="pathway name" value="CDK-mediated phosphorylation and removal of Cdc6"/>
</dbReference>
<dbReference type="Reactome" id="R-DME-69202">
    <property type="pathway name" value="Cyclin E associated events during G1/S transition"/>
</dbReference>
<dbReference type="Reactome" id="R-DME-69563">
    <property type="pathway name" value="p53-Dependent G1 DNA Damage Response"/>
</dbReference>
<dbReference type="Reactome" id="R-DME-9706019">
    <property type="pathway name" value="RHOBTB3 ATPase cycle"/>
</dbReference>
<dbReference type="SignaLink" id="P54733"/>
<dbReference type="BioGRID-ORCS" id="34924">
    <property type="hits" value="1 hit in 3 CRISPR screens"/>
</dbReference>
<dbReference type="GenomeRNAi" id="34924"/>
<dbReference type="PRO" id="PR:P54733"/>
<dbReference type="Proteomes" id="UP000000803">
    <property type="component" value="Chromosome 2L"/>
</dbReference>
<dbReference type="Bgee" id="FBgn0010382">
    <property type="expression patterns" value="Expressed in cleaving embryo and 112 other cell types or tissues"/>
</dbReference>
<dbReference type="ExpressionAtlas" id="P54733">
    <property type="expression patterns" value="baseline and differential"/>
</dbReference>
<dbReference type="GO" id="GO:0097134">
    <property type="term" value="C:cyclin E1-CDK2 complex"/>
    <property type="evidence" value="ECO:0000318"/>
    <property type="project" value="GO_Central"/>
</dbReference>
<dbReference type="GO" id="GO:0005737">
    <property type="term" value="C:cytoplasm"/>
    <property type="evidence" value="ECO:0000318"/>
    <property type="project" value="GO_Central"/>
</dbReference>
<dbReference type="GO" id="GO:0005815">
    <property type="term" value="C:microtubule organizing center"/>
    <property type="evidence" value="ECO:0000318"/>
    <property type="project" value="GO_Central"/>
</dbReference>
<dbReference type="GO" id="GO:0005634">
    <property type="term" value="C:nucleus"/>
    <property type="evidence" value="ECO:0000314"/>
    <property type="project" value="UniProtKB"/>
</dbReference>
<dbReference type="GO" id="GO:0016538">
    <property type="term" value="F:cyclin-dependent protein serine/threonine kinase regulator activity"/>
    <property type="evidence" value="ECO:0000314"/>
    <property type="project" value="FlyBase"/>
</dbReference>
<dbReference type="GO" id="GO:0035736">
    <property type="term" value="P:cell proliferation involved in compound eye morphogenesis"/>
    <property type="evidence" value="ECO:0000315"/>
    <property type="project" value="FlyBase"/>
</dbReference>
<dbReference type="GO" id="GO:0007307">
    <property type="term" value="P:eggshell chorion gene amplification"/>
    <property type="evidence" value="ECO:0000315"/>
    <property type="project" value="FlyBase"/>
</dbReference>
<dbReference type="GO" id="GO:0000082">
    <property type="term" value="P:G1/S transition of mitotic cell cycle"/>
    <property type="evidence" value="ECO:0000314"/>
    <property type="project" value="UniProtKB"/>
</dbReference>
<dbReference type="GO" id="GO:0007400">
    <property type="term" value="P:neuroblast fate determination"/>
    <property type="evidence" value="ECO:0000315"/>
    <property type="project" value="FlyBase"/>
</dbReference>
<dbReference type="GO" id="GO:0048665">
    <property type="term" value="P:neuron fate specification"/>
    <property type="evidence" value="ECO:0000314"/>
    <property type="project" value="FlyBase"/>
</dbReference>
<dbReference type="GO" id="GO:0007422">
    <property type="term" value="P:peripheral nervous system development"/>
    <property type="evidence" value="ECO:0000270"/>
    <property type="project" value="UniProtKB"/>
</dbReference>
<dbReference type="GO" id="GO:0007277">
    <property type="term" value="P:pole cell development"/>
    <property type="evidence" value="ECO:0000270"/>
    <property type="project" value="UniProtKB"/>
</dbReference>
<dbReference type="GO" id="GO:0043065">
    <property type="term" value="P:positive regulation of apoptotic process"/>
    <property type="evidence" value="ECO:0000315"/>
    <property type="project" value="FlyBase"/>
</dbReference>
<dbReference type="GO" id="GO:1900087">
    <property type="term" value="P:positive regulation of G1/S transition of mitotic cell cycle"/>
    <property type="evidence" value="ECO:0000315"/>
    <property type="project" value="FlyBase"/>
</dbReference>
<dbReference type="GO" id="GO:0046427">
    <property type="term" value="P:positive regulation of receptor signaling pathway via JAK-STAT"/>
    <property type="evidence" value="ECO:0000316"/>
    <property type="project" value="FlyBase"/>
</dbReference>
<dbReference type="GO" id="GO:0042127">
    <property type="term" value="P:regulation of cell population proliferation"/>
    <property type="evidence" value="ECO:0000315"/>
    <property type="project" value="FlyBase"/>
</dbReference>
<dbReference type="GO" id="GO:0006275">
    <property type="term" value="P:regulation of DNA replication"/>
    <property type="evidence" value="ECO:0000315"/>
    <property type="project" value="FlyBase"/>
</dbReference>
<dbReference type="GO" id="GO:0090210">
    <property type="term" value="P:regulation of establishment of blood-brain barrier"/>
    <property type="evidence" value="ECO:0000315"/>
    <property type="project" value="FlyBase"/>
</dbReference>
<dbReference type="GO" id="GO:0007096">
    <property type="term" value="P:regulation of exit from mitosis"/>
    <property type="evidence" value="ECO:0000316"/>
    <property type="project" value="FlyBase"/>
</dbReference>
<dbReference type="GO" id="GO:0045035">
    <property type="term" value="P:sensory organ precursor cell division"/>
    <property type="evidence" value="ECO:0000315"/>
    <property type="project" value="FlyBase"/>
</dbReference>
<dbReference type="GO" id="GO:0035019">
    <property type="term" value="P:somatic stem cell population maintenance"/>
    <property type="evidence" value="ECO:0000314"/>
    <property type="project" value="FlyBase"/>
</dbReference>
<dbReference type="GO" id="GO:0007419">
    <property type="term" value="P:ventral cord development"/>
    <property type="evidence" value="ECO:0007001"/>
    <property type="project" value="FlyBase"/>
</dbReference>
<dbReference type="GO" id="GO:0035220">
    <property type="term" value="P:wing disc development"/>
    <property type="evidence" value="ECO:0000316"/>
    <property type="project" value="FlyBase"/>
</dbReference>
<dbReference type="CDD" id="cd20519">
    <property type="entry name" value="CYCLIN_CCNE_rpt1"/>
    <property type="match status" value="1"/>
</dbReference>
<dbReference type="CDD" id="cd20520">
    <property type="entry name" value="CYCLIN_CCNE_rpt2"/>
    <property type="match status" value="1"/>
</dbReference>
<dbReference type="FunFam" id="1.10.472.10:FF:000159">
    <property type="entry name" value="G1/S-specific cyclin-E isoform X2"/>
    <property type="match status" value="1"/>
</dbReference>
<dbReference type="FunFam" id="1.10.472.10:FF:000001">
    <property type="entry name" value="G2/mitotic-specific cyclin"/>
    <property type="match status" value="1"/>
</dbReference>
<dbReference type="Gene3D" id="1.10.472.10">
    <property type="entry name" value="Cyclin-like"/>
    <property type="match status" value="2"/>
</dbReference>
<dbReference type="InterPro" id="IPR039361">
    <property type="entry name" value="Cyclin"/>
</dbReference>
<dbReference type="InterPro" id="IPR013763">
    <property type="entry name" value="Cyclin-like_dom"/>
</dbReference>
<dbReference type="InterPro" id="IPR036915">
    <property type="entry name" value="Cyclin-like_sf"/>
</dbReference>
<dbReference type="InterPro" id="IPR004367">
    <property type="entry name" value="Cyclin_C-dom"/>
</dbReference>
<dbReference type="InterPro" id="IPR006671">
    <property type="entry name" value="Cyclin_N"/>
</dbReference>
<dbReference type="InterPro" id="IPR048258">
    <property type="entry name" value="Cyclins_cyclin-box"/>
</dbReference>
<dbReference type="PANTHER" id="PTHR10177">
    <property type="entry name" value="CYCLINS"/>
    <property type="match status" value="1"/>
</dbReference>
<dbReference type="Pfam" id="PF02984">
    <property type="entry name" value="Cyclin_C"/>
    <property type="match status" value="1"/>
</dbReference>
<dbReference type="Pfam" id="PF00134">
    <property type="entry name" value="Cyclin_N"/>
    <property type="match status" value="1"/>
</dbReference>
<dbReference type="SMART" id="SM00385">
    <property type="entry name" value="CYCLIN"/>
    <property type="match status" value="1"/>
</dbReference>
<dbReference type="SMART" id="SM01332">
    <property type="entry name" value="Cyclin_C"/>
    <property type="match status" value="1"/>
</dbReference>
<dbReference type="SUPFAM" id="SSF47954">
    <property type="entry name" value="Cyclin-like"/>
    <property type="match status" value="2"/>
</dbReference>
<dbReference type="PROSITE" id="PS00292">
    <property type="entry name" value="CYCLINS"/>
    <property type="match status" value="1"/>
</dbReference>